<accession>B7GG69</accession>
<keyword id="KW-0963">Cytoplasm</keyword>
<keyword id="KW-0460">Magnesium</keyword>
<keyword id="KW-0479">Metal-binding</keyword>
<keyword id="KW-0548">Nucleotidyltransferase</keyword>
<keyword id="KW-0694">RNA-binding</keyword>
<keyword id="KW-0808">Transferase</keyword>
<comment type="function">
    <text evidence="1">Involved in mRNA degradation. Catalyzes the phosphorolysis of single-stranded polyribonucleotides processively in the 3'- to 5'-direction.</text>
</comment>
<comment type="catalytic activity">
    <reaction evidence="1">
        <text>RNA(n+1) + phosphate = RNA(n) + a ribonucleoside 5'-diphosphate</text>
        <dbReference type="Rhea" id="RHEA:22096"/>
        <dbReference type="Rhea" id="RHEA-COMP:14527"/>
        <dbReference type="Rhea" id="RHEA-COMP:17342"/>
        <dbReference type="ChEBI" id="CHEBI:43474"/>
        <dbReference type="ChEBI" id="CHEBI:57930"/>
        <dbReference type="ChEBI" id="CHEBI:140395"/>
        <dbReference type="EC" id="2.7.7.8"/>
    </reaction>
</comment>
<comment type="cofactor">
    <cofactor evidence="1">
        <name>Mg(2+)</name>
        <dbReference type="ChEBI" id="CHEBI:18420"/>
    </cofactor>
</comment>
<comment type="subcellular location">
    <subcellularLocation>
        <location evidence="1">Cytoplasm</location>
    </subcellularLocation>
</comment>
<comment type="similarity">
    <text evidence="1">Belongs to the polyribonucleotide nucleotidyltransferase family.</text>
</comment>
<dbReference type="EC" id="2.7.7.8" evidence="1"/>
<dbReference type="EMBL" id="CP000922">
    <property type="protein sequence ID" value="ACJ34050.1"/>
    <property type="molecule type" value="Genomic_DNA"/>
</dbReference>
<dbReference type="RefSeq" id="WP_012575265.1">
    <property type="nucleotide sequence ID" value="NC_011567.1"/>
</dbReference>
<dbReference type="SMR" id="B7GG69"/>
<dbReference type="STRING" id="491915.Aflv_1689"/>
<dbReference type="GeneID" id="7037942"/>
<dbReference type="KEGG" id="afl:Aflv_1689"/>
<dbReference type="PATRIC" id="fig|491915.6.peg.1738"/>
<dbReference type="eggNOG" id="COG1185">
    <property type="taxonomic scope" value="Bacteria"/>
</dbReference>
<dbReference type="HOGENOM" id="CLU_004217_2_2_9"/>
<dbReference type="Proteomes" id="UP000000742">
    <property type="component" value="Chromosome"/>
</dbReference>
<dbReference type="GO" id="GO:0005829">
    <property type="term" value="C:cytosol"/>
    <property type="evidence" value="ECO:0007669"/>
    <property type="project" value="TreeGrafter"/>
</dbReference>
<dbReference type="GO" id="GO:0000175">
    <property type="term" value="F:3'-5'-RNA exonuclease activity"/>
    <property type="evidence" value="ECO:0007669"/>
    <property type="project" value="TreeGrafter"/>
</dbReference>
<dbReference type="GO" id="GO:0000287">
    <property type="term" value="F:magnesium ion binding"/>
    <property type="evidence" value="ECO:0007669"/>
    <property type="project" value="UniProtKB-UniRule"/>
</dbReference>
<dbReference type="GO" id="GO:0004654">
    <property type="term" value="F:polyribonucleotide nucleotidyltransferase activity"/>
    <property type="evidence" value="ECO:0007669"/>
    <property type="project" value="UniProtKB-UniRule"/>
</dbReference>
<dbReference type="GO" id="GO:0003723">
    <property type="term" value="F:RNA binding"/>
    <property type="evidence" value="ECO:0007669"/>
    <property type="project" value="UniProtKB-UniRule"/>
</dbReference>
<dbReference type="GO" id="GO:0006402">
    <property type="term" value="P:mRNA catabolic process"/>
    <property type="evidence" value="ECO:0007669"/>
    <property type="project" value="UniProtKB-UniRule"/>
</dbReference>
<dbReference type="GO" id="GO:0006396">
    <property type="term" value="P:RNA processing"/>
    <property type="evidence" value="ECO:0007669"/>
    <property type="project" value="InterPro"/>
</dbReference>
<dbReference type="CDD" id="cd02393">
    <property type="entry name" value="KH-I_PNPase"/>
    <property type="match status" value="1"/>
</dbReference>
<dbReference type="CDD" id="cd11363">
    <property type="entry name" value="RNase_PH_PNPase_1"/>
    <property type="match status" value="1"/>
</dbReference>
<dbReference type="CDD" id="cd11364">
    <property type="entry name" value="RNase_PH_PNPase_2"/>
    <property type="match status" value="1"/>
</dbReference>
<dbReference type="CDD" id="cd04472">
    <property type="entry name" value="S1_PNPase"/>
    <property type="match status" value="1"/>
</dbReference>
<dbReference type="FunFam" id="2.40.50.140:FF:000023">
    <property type="entry name" value="Polyribonucleotide nucleotidyltransferase"/>
    <property type="match status" value="1"/>
</dbReference>
<dbReference type="FunFam" id="3.30.1370.10:FF:000001">
    <property type="entry name" value="Polyribonucleotide nucleotidyltransferase"/>
    <property type="match status" value="1"/>
</dbReference>
<dbReference type="FunFam" id="3.30.230.70:FF:000001">
    <property type="entry name" value="Polyribonucleotide nucleotidyltransferase"/>
    <property type="match status" value="1"/>
</dbReference>
<dbReference type="FunFam" id="3.30.230.70:FF:000002">
    <property type="entry name" value="Polyribonucleotide nucleotidyltransferase"/>
    <property type="match status" value="1"/>
</dbReference>
<dbReference type="Gene3D" id="3.30.230.70">
    <property type="entry name" value="GHMP Kinase, N-terminal domain"/>
    <property type="match status" value="2"/>
</dbReference>
<dbReference type="Gene3D" id="3.30.1370.10">
    <property type="entry name" value="K Homology domain, type 1"/>
    <property type="match status" value="1"/>
</dbReference>
<dbReference type="Gene3D" id="2.40.50.140">
    <property type="entry name" value="Nucleic acid-binding proteins"/>
    <property type="match status" value="1"/>
</dbReference>
<dbReference type="HAMAP" id="MF_01595">
    <property type="entry name" value="PNPase"/>
    <property type="match status" value="1"/>
</dbReference>
<dbReference type="InterPro" id="IPR001247">
    <property type="entry name" value="ExoRNase_PH_dom1"/>
</dbReference>
<dbReference type="InterPro" id="IPR015847">
    <property type="entry name" value="ExoRNase_PH_dom2"/>
</dbReference>
<dbReference type="InterPro" id="IPR036345">
    <property type="entry name" value="ExoRNase_PH_dom2_sf"/>
</dbReference>
<dbReference type="InterPro" id="IPR004087">
    <property type="entry name" value="KH_dom"/>
</dbReference>
<dbReference type="InterPro" id="IPR004088">
    <property type="entry name" value="KH_dom_type_1"/>
</dbReference>
<dbReference type="InterPro" id="IPR036612">
    <property type="entry name" value="KH_dom_type_1_sf"/>
</dbReference>
<dbReference type="InterPro" id="IPR012340">
    <property type="entry name" value="NA-bd_OB-fold"/>
</dbReference>
<dbReference type="InterPro" id="IPR012162">
    <property type="entry name" value="PNPase"/>
</dbReference>
<dbReference type="InterPro" id="IPR027408">
    <property type="entry name" value="PNPase/RNase_PH_dom_sf"/>
</dbReference>
<dbReference type="InterPro" id="IPR015848">
    <property type="entry name" value="PNPase_PH_RNA-bd_bac/org-type"/>
</dbReference>
<dbReference type="InterPro" id="IPR020568">
    <property type="entry name" value="Ribosomal_Su5_D2-typ_SF"/>
</dbReference>
<dbReference type="InterPro" id="IPR003029">
    <property type="entry name" value="S1_domain"/>
</dbReference>
<dbReference type="NCBIfam" id="TIGR03591">
    <property type="entry name" value="polynuc_phos"/>
    <property type="match status" value="1"/>
</dbReference>
<dbReference type="NCBIfam" id="NF008805">
    <property type="entry name" value="PRK11824.1"/>
    <property type="match status" value="1"/>
</dbReference>
<dbReference type="PANTHER" id="PTHR11252">
    <property type="entry name" value="POLYRIBONUCLEOTIDE NUCLEOTIDYLTRANSFERASE"/>
    <property type="match status" value="1"/>
</dbReference>
<dbReference type="PANTHER" id="PTHR11252:SF0">
    <property type="entry name" value="POLYRIBONUCLEOTIDE NUCLEOTIDYLTRANSFERASE 1, MITOCHONDRIAL"/>
    <property type="match status" value="1"/>
</dbReference>
<dbReference type="Pfam" id="PF00013">
    <property type="entry name" value="KH_1"/>
    <property type="match status" value="1"/>
</dbReference>
<dbReference type="Pfam" id="PF03726">
    <property type="entry name" value="PNPase"/>
    <property type="match status" value="1"/>
</dbReference>
<dbReference type="Pfam" id="PF01138">
    <property type="entry name" value="RNase_PH"/>
    <property type="match status" value="2"/>
</dbReference>
<dbReference type="Pfam" id="PF03725">
    <property type="entry name" value="RNase_PH_C"/>
    <property type="match status" value="2"/>
</dbReference>
<dbReference type="Pfam" id="PF00575">
    <property type="entry name" value="S1"/>
    <property type="match status" value="1"/>
</dbReference>
<dbReference type="PIRSF" id="PIRSF005499">
    <property type="entry name" value="PNPase"/>
    <property type="match status" value="1"/>
</dbReference>
<dbReference type="SMART" id="SM00322">
    <property type="entry name" value="KH"/>
    <property type="match status" value="1"/>
</dbReference>
<dbReference type="SMART" id="SM00316">
    <property type="entry name" value="S1"/>
    <property type="match status" value="1"/>
</dbReference>
<dbReference type="SUPFAM" id="SSF54791">
    <property type="entry name" value="Eukaryotic type KH-domain (KH-domain type I)"/>
    <property type="match status" value="1"/>
</dbReference>
<dbReference type="SUPFAM" id="SSF50249">
    <property type="entry name" value="Nucleic acid-binding proteins"/>
    <property type="match status" value="1"/>
</dbReference>
<dbReference type="SUPFAM" id="SSF55666">
    <property type="entry name" value="Ribonuclease PH domain 2-like"/>
    <property type="match status" value="2"/>
</dbReference>
<dbReference type="SUPFAM" id="SSF54211">
    <property type="entry name" value="Ribosomal protein S5 domain 2-like"/>
    <property type="match status" value="2"/>
</dbReference>
<dbReference type="PROSITE" id="PS50084">
    <property type="entry name" value="KH_TYPE_1"/>
    <property type="match status" value="1"/>
</dbReference>
<dbReference type="PROSITE" id="PS50126">
    <property type="entry name" value="S1"/>
    <property type="match status" value="1"/>
</dbReference>
<reference key="1">
    <citation type="journal article" date="2008" name="Genome Biol.">
        <title>Encapsulated in silica: genome, proteome and physiology of the thermophilic bacterium Anoxybacillus flavithermus WK1.</title>
        <authorList>
            <person name="Saw J.H."/>
            <person name="Mountain B.W."/>
            <person name="Feng L."/>
            <person name="Omelchenko M.V."/>
            <person name="Hou S."/>
            <person name="Saito J.A."/>
            <person name="Stott M.B."/>
            <person name="Li D."/>
            <person name="Zhao G."/>
            <person name="Wu J."/>
            <person name="Galperin M.Y."/>
            <person name="Koonin E.V."/>
            <person name="Makarova K.S."/>
            <person name="Wolf Y.I."/>
            <person name="Rigden D.J."/>
            <person name="Dunfield P.F."/>
            <person name="Wang L."/>
            <person name="Alam M."/>
        </authorList>
    </citation>
    <scope>NUCLEOTIDE SEQUENCE [LARGE SCALE GENOMIC DNA]</scope>
    <source>
        <strain>DSM 21510 / WK1</strain>
    </source>
</reference>
<evidence type="ECO:0000255" key="1">
    <source>
        <dbReference type="HAMAP-Rule" id="MF_01595"/>
    </source>
</evidence>
<feature type="chain" id="PRO_1000147881" description="Polyribonucleotide nucleotidyltransferase">
    <location>
        <begin position="1"/>
        <end position="702"/>
    </location>
</feature>
<feature type="domain" description="KH" evidence="1">
    <location>
        <begin position="554"/>
        <end position="613"/>
    </location>
</feature>
<feature type="domain" description="S1 motif" evidence="1">
    <location>
        <begin position="623"/>
        <end position="691"/>
    </location>
</feature>
<feature type="binding site" evidence="1">
    <location>
        <position position="487"/>
    </location>
    <ligand>
        <name>Mg(2+)</name>
        <dbReference type="ChEBI" id="CHEBI:18420"/>
    </ligand>
</feature>
<feature type="binding site" evidence="1">
    <location>
        <position position="493"/>
    </location>
    <ligand>
        <name>Mg(2+)</name>
        <dbReference type="ChEBI" id="CHEBI:18420"/>
    </ligand>
</feature>
<name>PNP_ANOFW</name>
<protein>
    <recommendedName>
        <fullName evidence="1">Polyribonucleotide nucleotidyltransferase</fullName>
        <ecNumber evidence="1">2.7.7.8</ecNumber>
    </recommendedName>
    <alternativeName>
        <fullName evidence="1">Polynucleotide phosphorylase</fullName>
        <shortName evidence="1">PNPase</shortName>
    </alternativeName>
</protein>
<gene>
    <name evidence="1" type="primary">pnp</name>
    <name type="ordered locus">Aflv_1689</name>
</gene>
<proteinExistence type="inferred from homology"/>
<sequence length="702" mass="77299">MEQEKHVFSIDWAGRPLTVEIGELAKQANGAVLVRYGDTVVLSTATASKEPKSVDFFPLTVNYEERLYAVGKIPGGFIKREGRPSEKAILASRLIDRPIRPLFAEGFRNEVQVVSMVMSVDQDCSPEMAAMFGSSLALTISDIPFEGPIAGVTVGRVDGKFVINPSVAQMEQSDMHLVVAGTKDAINMVEAGANEVPEEVMLEAIMFGHEEIKRLIAFQEDIAAKVGKEKMEVVLYELNAELEAEIRARVEGEVKRAVQVPEKLAREAAIEQLKAEVVAAYEEQEADEETLKQVKEILYKLVKEEVRRLITEEKVRPDGRKVDEIRPLSSAVGLLPRTHGSGLFTRGQTQALSVCTLGALGDVQILDGLGIEETKRFMHHYNFPPFSVGETGAMRGPGRREIGHGALGERALEPVIPSEKEFPYTIRLVSEVLESNGSTSQASICASTLAMMDAGVPIKAPVAGIAMGLVKSGEHYTILTDIQGMEDHLGDMDFKVAGTEKGVTALQMDIKIKGLSREILEEALQQARKGRLEILKHMMQTISEPRKELSPYAPKILTMQINPDKIRDVIGPSGKQINKIIEETGVKIDIEQDGTIFISSVNEEMNKKAKKIIEDIVREVEVGQVYLGKVKRIEKFGAFVELFSGKDGLVHISELAEERVGKVEDVVSIGDEILVKVTEIDKQGRVNLSRKAVLRDQKEAEQ</sequence>
<organism>
    <name type="scientific">Anoxybacillus flavithermus (strain DSM 21510 / WK1)</name>
    <dbReference type="NCBI Taxonomy" id="491915"/>
    <lineage>
        <taxon>Bacteria</taxon>
        <taxon>Bacillati</taxon>
        <taxon>Bacillota</taxon>
        <taxon>Bacilli</taxon>
        <taxon>Bacillales</taxon>
        <taxon>Anoxybacillaceae</taxon>
        <taxon>Anoxybacillus</taxon>
    </lineage>
</organism>